<sequence>MAYFNQHQSMISKRYLTFFSKSKKKKPFSAGQLIGLILGPLLFLLTLLFFHPQDLPWKGVYVLAITLWIATWWITEAIPIAATSLLPIVLLPLGHILTPEQVSSEYGNDIIFLFLGGFILAIAMERWNLHTRVALTIINLIGASTSKILLGFMVATGFLSMFVSNTAAVMIMIPIGLAIIKEAHDLQEANTNQTSIQKFEKSLVLAIGYAGTIGGLGTLIGTPPLIILKGQYMQHFGHEISFAKWMIVGIPTVIVLLGITWLYLRYVAFRHDLKYLPGGQTLIKQKLDELGKMKYEEKVVQTIFVLASLLWITREFLLKKWEVTSSVADGTIAIFISILLFIIPAKNTEKHRRIIDWEVAKELPWGVLILFGGGLALAKGISESGLAKWLGEQLKSLNGVSPILIVIVITIFVLFLTEVTSNTATATMILPILATLSVAVGVHPLLLMAPAAMAANCAYMLPVGTPPNAIIFGSGKISIKQMASVGFWVNLISAIIIILVVYYVMPIVLGIDINQPLPLK</sequence>
<name>SDCS_STAAN</name>
<gene>
    <name type="primary">sdcS</name>
    <name type="ordered locus">SA1732</name>
</gene>
<feature type="chain" id="PRO_0000260097" description="Sodium-dependent dicarboxylate transporter SdcS">
    <location>
        <begin position="1"/>
        <end position="520"/>
    </location>
</feature>
<feature type="transmembrane region" description="Helical" evidence="2">
    <location>
        <begin position="30"/>
        <end position="50"/>
    </location>
</feature>
<feature type="transmembrane region" description="Helical" evidence="2">
    <location>
        <begin position="55"/>
        <end position="75"/>
    </location>
</feature>
<feature type="transmembrane region" description="Helical" evidence="2">
    <location>
        <begin position="77"/>
        <end position="97"/>
    </location>
</feature>
<feature type="transmembrane region" description="Helical" evidence="2">
    <location>
        <begin position="104"/>
        <end position="124"/>
    </location>
</feature>
<feature type="transmembrane region" description="Helical" evidence="2">
    <location>
        <begin position="160"/>
        <end position="180"/>
    </location>
</feature>
<feature type="transmembrane region" description="Helical" evidence="2">
    <location>
        <begin position="207"/>
        <end position="227"/>
    </location>
</feature>
<feature type="transmembrane region" description="Helical" evidence="2">
    <location>
        <begin position="242"/>
        <end position="262"/>
    </location>
</feature>
<feature type="transmembrane region" description="Helical" evidence="2">
    <location>
        <begin position="298"/>
        <end position="318"/>
    </location>
</feature>
<feature type="transmembrane region" description="Helical" evidence="2">
    <location>
        <begin position="323"/>
        <end position="343"/>
    </location>
</feature>
<feature type="transmembrane region" description="Helical" evidence="2">
    <location>
        <begin position="362"/>
        <end position="382"/>
    </location>
</feature>
<feature type="transmembrane region" description="Helical" evidence="2">
    <location>
        <begin position="399"/>
        <end position="419"/>
    </location>
</feature>
<feature type="transmembrane region" description="Helical" evidence="2">
    <location>
        <begin position="428"/>
        <end position="448"/>
    </location>
</feature>
<feature type="transmembrane region" description="Helical" evidence="2">
    <location>
        <begin position="452"/>
        <end position="472"/>
    </location>
</feature>
<feature type="transmembrane region" description="Helical" evidence="2">
    <location>
        <begin position="491"/>
        <end position="511"/>
    </location>
</feature>
<proteinExistence type="evidence at protein level"/>
<comment type="function">
    <text evidence="1">Mediates the transport of the dicarboxylates fumarate, malate, and succinate across the cytoplasmic membrane via a Na(+)-electrochemical gradient.</text>
</comment>
<comment type="subcellular location">
    <subcellularLocation>
        <location evidence="3">Cell membrane</location>
        <topology evidence="3">Multi-pass membrane protein</topology>
    </subcellularLocation>
</comment>
<comment type="similarity">
    <text evidence="3">Belongs to the SLC13A/DASS transporter (TC 2.A.47) family. NADC subfamily.</text>
</comment>
<dbReference type="EMBL" id="BA000018">
    <property type="protein sequence ID" value="BAB43002.1"/>
    <property type="molecule type" value="Genomic_DNA"/>
</dbReference>
<dbReference type="PIR" id="C89980">
    <property type="entry name" value="C89980"/>
</dbReference>
<dbReference type="RefSeq" id="WP_000323161.1">
    <property type="nucleotide sequence ID" value="NC_002745.2"/>
</dbReference>
<dbReference type="SMR" id="Q7A4P8"/>
<dbReference type="EnsemblBacteria" id="BAB43002">
    <property type="protein sequence ID" value="BAB43002"/>
    <property type="gene ID" value="BAB43002"/>
</dbReference>
<dbReference type="KEGG" id="sau:SA1732"/>
<dbReference type="HOGENOM" id="CLU_005170_0_0_9"/>
<dbReference type="GO" id="GO:0005886">
    <property type="term" value="C:plasma membrane"/>
    <property type="evidence" value="ECO:0007669"/>
    <property type="project" value="UniProtKB-SubCell"/>
</dbReference>
<dbReference type="GO" id="GO:0008514">
    <property type="term" value="F:organic anion transmembrane transporter activity"/>
    <property type="evidence" value="ECO:0007669"/>
    <property type="project" value="UniProtKB-ARBA"/>
</dbReference>
<dbReference type="GO" id="GO:0015293">
    <property type="term" value="F:symporter activity"/>
    <property type="evidence" value="ECO:0007669"/>
    <property type="project" value="UniProtKB-KW"/>
</dbReference>
<dbReference type="GO" id="GO:1905039">
    <property type="term" value="P:carboxylic acid transmembrane transport"/>
    <property type="evidence" value="ECO:0007669"/>
    <property type="project" value="UniProtKB-ARBA"/>
</dbReference>
<dbReference type="GO" id="GO:0006814">
    <property type="term" value="P:sodium ion transport"/>
    <property type="evidence" value="ECO:0007669"/>
    <property type="project" value="UniProtKB-KW"/>
</dbReference>
<dbReference type="CDD" id="cd01115">
    <property type="entry name" value="SLC13_permease"/>
    <property type="match status" value="1"/>
</dbReference>
<dbReference type="InterPro" id="IPR001898">
    <property type="entry name" value="SLC13A/DASS"/>
</dbReference>
<dbReference type="NCBIfam" id="TIGR00785">
    <property type="entry name" value="dass"/>
    <property type="match status" value="1"/>
</dbReference>
<dbReference type="PANTHER" id="PTHR10283">
    <property type="entry name" value="SOLUTE CARRIER FAMILY 13 MEMBER"/>
    <property type="match status" value="1"/>
</dbReference>
<dbReference type="PANTHER" id="PTHR10283:SF82">
    <property type="entry name" value="SOLUTE CARRIER FAMILY 13 MEMBER 2"/>
    <property type="match status" value="1"/>
</dbReference>
<dbReference type="Pfam" id="PF00939">
    <property type="entry name" value="Na_sulph_symp"/>
    <property type="match status" value="1"/>
</dbReference>
<organism>
    <name type="scientific">Staphylococcus aureus (strain N315)</name>
    <dbReference type="NCBI Taxonomy" id="158879"/>
    <lineage>
        <taxon>Bacteria</taxon>
        <taxon>Bacillati</taxon>
        <taxon>Bacillota</taxon>
        <taxon>Bacilli</taxon>
        <taxon>Bacillales</taxon>
        <taxon>Staphylococcaceae</taxon>
        <taxon>Staphylococcus</taxon>
    </lineage>
</organism>
<evidence type="ECO:0000250" key="1"/>
<evidence type="ECO:0000255" key="2"/>
<evidence type="ECO:0000305" key="3"/>
<protein>
    <recommendedName>
        <fullName>Sodium-dependent dicarboxylate transporter SdcS</fullName>
    </recommendedName>
    <alternativeName>
        <fullName>Na(+)/dicarboxylate symporter</fullName>
    </alternativeName>
</protein>
<reference key="1">
    <citation type="journal article" date="2001" name="Lancet">
        <title>Whole genome sequencing of meticillin-resistant Staphylococcus aureus.</title>
        <authorList>
            <person name="Kuroda M."/>
            <person name="Ohta T."/>
            <person name="Uchiyama I."/>
            <person name="Baba T."/>
            <person name="Yuzawa H."/>
            <person name="Kobayashi I."/>
            <person name="Cui L."/>
            <person name="Oguchi A."/>
            <person name="Aoki K."/>
            <person name="Nagai Y."/>
            <person name="Lian J.-Q."/>
            <person name="Ito T."/>
            <person name="Kanamori M."/>
            <person name="Matsumaru H."/>
            <person name="Maruyama A."/>
            <person name="Murakami H."/>
            <person name="Hosoyama A."/>
            <person name="Mizutani-Ui Y."/>
            <person name="Takahashi N.K."/>
            <person name="Sawano T."/>
            <person name="Inoue R."/>
            <person name="Kaito C."/>
            <person name="Sekimizu K."/>
            <person name="Hirakawa H."/>
            <person name="Kuhara S."/>
            <person name="Goto S."/>
            <person name="Yabuzaki J."/>
            <person name="Kanehisa M."/>
            <person name="Yamashita A."/>
            <person name="Oshima K."/>
            <person name="Furuya K."/>
            <person name="Yoshino C."/>
            <person name="Shiba T."/>
            <person name="Hattori M."/>
            <person name="Ogasawara N."/>
            <person name="Hayashi H."/>
            <person name="Hiramatsu K."/>
        </authorList>
    </citation>
    <scope>NUCLEOTIDE SEQUENCE [LARGE SCALE GENOMIC DNA]</scope>
    <source>
        <strain>N315</strain>
    </source>
</reference>
<reference key="2">
    <citation type="submission" date="2007-10" db="UniProtKB">
        <title>Shotgun proteomic analysis of total and membrane protein extracts of S. aureus strain N315.</title>
        <authorList>
            <person name="Vaezzadeh A.R."/>
            <person name="Deshusses J."/>
            <person name="Lescuyer P."/>
            <person name="Hochstrasser D.F."/>
        </authorList>
    </citation>
    <scope>IDENTIFICATION BY MASS SPECTROMETRY [LARGE SCALE ANALYSIS]</scope>
    <source>
        <strain>N315</strain>
    </source>
</reference>
<keyword id="KW-1003">Cell membrane</keyword>
<keyword id="KW-0406">Ion transport</keyword>
<keyword id="KW-0472">Membrane</keyword>
<keyword id="KW-0915">Sodium</keyword>
<keyword id="KW-0739">Sodium transport</keyword>
<keyword id="KW-0769">Symport</keyword>
<keyword id="KW-0812">Transmembrane</keyword>
<keyword id="KW-1133">Transmembrane helix</keyword>
<keyword id="KW-0813">Transport</keyword>
<accession>Q7A4P8</accession>